<dbReference type="EC" id="2.3.2.27"/>
<dbReference type="EMBL" id="AB074480">
    <property type="protein sequence ID" value="BAB92950.1"/>
    <property type="status" value="ALT_INIT"/>
    <property type="molecule type" value="mRNA"/>
</dbReference>
<dbReference type="EMBL" id="AB064367">
    <property type="protein sequence ID" value="BAB82979.1"/>
    <property type="status" value="ALT_FRAME"/>
    <property type="molecule type" value="mRNA"/>
</dbReference>
<dbReference type="EMBL" id="AB076691">
    <property type="protein sequence ID" value="BAC00992.1"/>
    <property type="status" value="ALT_INIT"/>
    <property type="molecule type" value="mRNA"/>
</dbReference>
<dbReference type="EMBL" id="AB076692">
    <property type="protein sequence ID" value="BAC00993.1"/>
    <property type="status" value="ALT_INIT"/>
    <property type="molecule type" value="mRNA"/>
</dbReference>
<dbReference type="EMBL" id="AB076693">
    <property type="protein sequence ID" value="BAC00994.1"/>
    <property type="status" value="ALT_INIT"/>
    <property type="molecule type" value="mRNA"/>
</dbReference>
<dbReference type="EMBL" id="AB097000">
    <property type="protein sequence ID" value="BAC77353.1"/>
    <property type="status" value="ALT_INIT"/>
    <property type="molecule type" value="mRNA"/>
</dbReference>
<dbReference type="EMBL" id="AK091610">
    <property type="protein sequence ID" value="BAC03707.1"/>
    <property type="status" value="ALT_INIT"/>
    <property type="molecule type" value="mRNA"/>
</dbReference>
<dbReference type="EMBL" id="AK095914">
    <property type="protein sequence ID" value="BAC04646.1"/>
    <property type="status" value="ALT_INIT"/>
    <property type="molecule type" value="mRNA"/>
</dbReference>
<dbReference type="EMBL" id="AK096295">
    <property type="protein sequence ID" value="BAC04752.1"/>
    <property type="status" value="ALT_INIT"/>
    <property type="molecule type" value="mRNA"/>
</dbReference>
<dbReference type="EMBL" id="AK097106">
    <property type="protein sequence ID" value="BAC04952.1"/>
    <property type="status" value="ALT_INIT"/>
    <property type="molecule type" value="mRNA"/>
</dbReference>
<dbReference type="EMBL" id="AK098785">
    <property type="protein sequence ID" value="BAC05413.1"/>
    <property type="molecule type" value="mRNA"/>
</dbReference>
<dbReference type="EMBL" id="AK122751">
    <property type="protein sequence ID" value="BAG53705.1"/>
    <property type="molecule type" value="mRNA"/>
</dbReference>
<dbReference type="EMBL" id="AK122863">
    <property type="protein sequence ID" value="BAG53766.1"/>
    <property type="status" value="ALT_INIT"/>
    <property type="molecule type" value="mRNA"/>
</dbReference>
<dbReference type="EMBL" id="AK128167">
    <property type="protein sequence ID" value="BAG54643.1"/>
    <property type="molecule type" value="mRNA"/>
</dbReference>
<dbReference type="EMBL" id="AK302757">
    <property type="protein sequence ID" value="BAG63969.1"/>
    <property type="status" value="ALT_INIT"/>
    <property type="molecule type" value="mRNA"/>
</dbReference>
<dbReference type="EMBL" id="AL691432">
    <property type="status" value="NOT_ANNOTATED_CDS"/>
    <property type="molecule type" value="Genomic_DNA"/>
</dbReference>
<dbReference type="EMBL" id="BC016490">
    <property type="protein sequence ID" value="AAH16490.1"/>
    <property type="status" value="ALT_INIT"/>
    <property type="molecule type" value="mRNA"/>
</dbReference>
<dbReference type="EMBL" id="BC037542">
    <property type="protein sequence ID" value="AAH37542.1"/>
    <property type="status" value="ALT_INIT"/>
    <property type="molecule type" value="mRNA"/>
</dbReference>
<dbReference type="EMBL" id="AL834527">
    <property type="protein sequence ID" value="CAD39183.1"/>
    <property type="molecule type" value="mRNA"/>
</dbReference>
<dbReference type="CCDS" id="CCDS41224.3">
    <molecule id="Q96AX9-1"/>
</dbReference>
<dbReference type="CCDS" id="CCDS53261.2">
    <molecule id="Q96AX9-3"/>
</dbReference>
<dbReference type="CCDS" id="CCDS53262.2">
    <molecule id="Q96AX9-4"/>
</dbReference>
<dbReference type="CCDS" id="CCDS53264.1">
    <molecule id="Q96AX9-10"/>
</dbReference>
<dbReference type="RefSeq" id="NP_001164157.3">
    <molecule id="Q96AX9-3"/>
    <property type="nucleotide sequence ID" value="NM_001170686.4"/>
</dbReference>
<dbReference type="RefSeq" id="NP_001164158.3">
    <molecule id="Q96AX9-1"/>
    <property type="nucleotide sequence ID" value="NM_001170687.4"/>
</dbReference>
<dbReference type="RefSeq" id="NP_001164159.2">
    <molecule id="Q96AX9-4"/>
    <property type="nucleotide sequence ID" value="NM_001170688.2"/>
</dbReference>
<dbReference type="RefSeq" id="NP_001164160.1">
    <molecule id="Q96AX9-10"/>
    <property type="nucleotide sequence ID" value="NM_001170689.2"/>
</dbReference>
<dbReference type="RefSeq" id="NP_543151.4">
    <molecule id="Q96AX9-1"/>
    <property type="nucleotide sequence ID" value="NM_080875.5"/>
</dbReference>
<dbReference type="RefSeq" id="XP_011539039.2">
    <molecule id="Q96AX9-7"/>
    <property type="nucleotide sequence ID" value="XM_011540737.4"/>
</dbReference>
<dbReference type="RefSeq" id="XP_011539043.1">
    <property type="nucleotide sequence ID" value="XM_011540741.2"/>
</dbReference>
<dbReference type="RefSeq" id="XP_047302628.1">
    <molecule id="Q96AX9-7"/>
    <property type="nucleotide sequence ID" value="XM_047446672.1"/>
</dbReference>
<dbReference type="RefSeq" id="XP_054190486.1">
    <molecule id="Q96AX9-7"/>
    <property type="nucleotide sequence ID" value="XM_054334511.1"/>
</dbReference>
<dbReference type="RefSeq" id="XP_054190488.1">
    <molecule id="Q96AX9-7"/>
    <property type="nucleotide sequence ID" value="XM_054334513.1"/>
</dbReference>
<dbReference type="SMR" id="Q96AX9"/>
<dbReference type="BioGRID" id="126769">
    <property type="interactions" value="70"/>
</dbReference>
<dbReference type="FunCoup" id="Q96AX9">
    <property type="interactions" value="1394"/>
</dbReference>
<dbReference type="IntAct" id="Q96AX9">
    <property type="interactions" value="39"/>
</dbReference>
<dbReference type="STRING" id="9606.ENSP00000426103"/>
<dbReference type="GlyGen" id="Q96AX9">
    <property type="glycosylation" value="1 site"/>
</dbReference>
<dbReference type="iPTMnet" id="Q96AX9"/>
<dbReference type="PhosphoSitePlus" id="Q96AX9"/>
<dbReference type="BioMuta" id="MIB2"/>
<dbReference type="DMDM" id="209572707"/>
<dbReference type="jPOST" id="Q96AX9"/>
<dbReference type="MassIVE" id="Q96AX9"/>
<dbReference type="PaxDb" id="9606-ENSP00000426103"/>
<dbReference type="PeptideAtlas" id="Q96AX9"/>
<dbReference type="ProteomicsDB" id="20393"/>
<dbReference type="ProteomicsDB" id="20580"/>
<dbReference type="ProteomicsDB" id="30446"/>
<dbReference type="ProteomicsDB" id="3825"/>
<dbReference type="ProteomicsDB" id="76009">
    <molecule id="Q96AX9-1"/>
</dbReference>
<dbReference type="ProteomicsDB" id="76011">
    <molecule id="Q96AX9-3"/>
</dbReference>
<dbReference type="ProteomicsDB" id="76012">
    <molecule id="Q96AX9-4"/>
</dbReference>
<dbReference type="ProteomicsDB" id="76013">
    <molecule id="Q96AX9-5"/>
</dbReference>
<dbReference type="ProteomicsDB" id="76014">
    <molecule id="Q96AX9-6"/>
</dbReference>
<dbReference type="ProteomicsDB" id="76015">
    <molecule id="Q96AX9-7"/>
</dbReference>
<dbReference type="ProteomicsDB" id="76016">
    <molecule id="Q96AX9-8"/>
</dbReference>
<dbReference type="ProteomicsDB" id="76017">
    <molecule id="Q96AX9-9"/>
</dbReference>
<dbReference type="Pumba" id="Q96AX9"/>
<dbReference type="Antibodypedia" id="26451">
    <property type="antibodies" value="110 antibodies from 25 providers"/>
</dbReference>
<dbReference type="DNASU" id="142678"/>
<dbReference type="Ensembl" id="ENST00000355826.10">
    <molecule id="Q96AX9-1"/>
    <property type="protein sequence ID" value="ENSP00000348081.6"/>
    <property type="gene ID" value="ENSG00000197530.13"/>
</dbReference>
<dbReference type="Ensembl" id="ENST00000378708.5">
    <molecule id="Q96AX9-6"/>
    <property type="protein sequence ID" value="ENSP00000367980.1"/>
    <property type="gene ID" value="ENSG00000197530.13"/>
</dbReference>
<dbReference type="Ensembl" id="ENST00000378712.5">
    <molecule id="Q96AX9-10"/>
    <property type="protein sequence ID" value="ENSP00000367984.1"/>
    <property type="gene ID" value="ENSG00000197530.13"/>
</dbReference>
<dbReference type="Ensembl" id="ENST00000504599.6">
    <molecule id="Q96AX9-1"/>
    <property type="protein sequence ID" value="ENSP00000426128.2"/>
    <property type="gene ID" value="ENSG00000197530.13"/>
</dbReference>
<dbReference type="Ensembl" id="ENST00000505820.7">
    <molecule id="Q96AX9-1"/>
    <property type="protein sequence ID" value="ENSP00000426103.3"/>
    <property type="gene ID" value="ENSG00000197530.13"/>
</dbReference>
<dbReference type="Ensembl" id="ENST00000518681.6">
    <molecule id="Q96AX9-4"/>
    <property type="protein sequence ID" value="ENSP00000428264.2"/>
    <property type="gene ID" value="ENSG00000197530.13"/>
</dbReference>
<dbReference type="Ensembl" id="ENST00000520777.6">
    <molecule id="Q96AX9-3"/>
    <property type="protein sequence ID" value="ENSP00000428660.2"/>
    <property type="gene ID" value="ENSG00000197530.13"/>
</dbReference>
<dbReference type="GeneID" id="142678"/>
<dbReference type="KEGG" id="hsa:142678"/>
<dbReference type="MANE-Select" id="ENST00000355826.10">
    <property type="protein sequence ID" value="ENSP00000348081.6"/>
    <property type="RefSeq nucleotide sequence ID" value="NM_001170687.4"/>
    <property type="RefSeq protein sequence ID" value="NP_001164158.3"/>
</dbReference>
<dbReference type="UCSC" id="uc001agg.4">
    <molecule id="Q96AX9-1"/>
    <property type="organism name" value="human"/>
</dbReference>
<dbReference type="AGR" id="HGNC:30577"/>
<dbReference type="CTD" id="142678"/>
<dbReference type="DisGeNET" id="142678"/>
<dbReference type="GeneCards" id="MIB2"/>
<dbReference type="HGNC" id="HGNC:30577">
    <property type="gene designation" value="MIB2"/>
</dbReference>
<dbReference type="HPA" id="ENSG00000197530">
    <property type="expression patterns" value="Tissue enhanced (skeletal)"/>
</dbReference>
<dbReference type="MalaCards" id="MIB2"/>
<dbReference type="MIM" id="611141">
    <property type="type" value="gene"/>
</dbReference>
<dbReference type="neXtProt" id="NX_Q96AX9"/>
<dbReference type="OpenTargets" id="ENSG00000197530"/>
<dbReference type="Orphanet" id="54260">
    <property type="disease" value="Left ventricular noncompaction"/>
</dbReference>
<dbReference type="PharmGKB" id="PA134924284"/>
<dbReference type="VEuPathDB" id="HostDB:ENSG00000197530"/>
<dbReference type="eggNOG" id="KOG0504">
    <property type="taxonomic scope" value="Eukaryota"/>
</dbReference>
<dbReference type="eggNOG" id="KOG4582">
    <property type="taxonomic scope" value="Eukaryota"/>
</dbReference>
<dbReference type="GeneTree" id="ENSGT00940000158097"/>
<dbReference type="InParanoid" id="Q96AX9"/>
<dbReference type="OMA" id="HGACEHC"/>
<dbReference type="OrthoDB" id="2122982at2759"/>
<dbReference type="PAN-GO" id="Q96AX9">
    <property type="GO annotations" value="3 GO annotations based on evolutionary models"/>
</dbReference>
<dbReference type="PhylomeDB" id="Q96AX9"/>
<dbReference type="TreeFam" id="TF324147"/>
<dbReference type="PathwayCommons" id="Q96AX9"/>
<dbReference type="Reactome" id="R-HSA-2122948">
    <property type="pathway name" value="Activated NOTCH1 Transmits Signal to the Nucleus"/>
</dbReference>
<dbReference type="Reactome" id="R-HSA-2644606">
    <property type="pathway name" value="Constitutive Signaling by NOTCH1 PEST Domain Mutants"/>
</dbReference>
<dbReference type="Reactome" id="R-HSA-2691232">
    <property type="pathway name" value="Constitutive Signaling by NOTCH1 HD Domain Mutants"/>
</dbReference>
<dbReference type="Reactome" id="R-HSA-2894862">
    <property type="pathway name" value="Constitutive Signaling by NOTCH1 HD+PEST Domain Mutants"/>
</dbReference>
<dbReference type="Reactome" id="R-HSA-2979096">
    <property type="pathway name" value="NOTCH2 Activation and Transmission of Signal to the Nucleus"/>
</dbReference>
<dbReference type="Reactome" id="R-HSA-5357786">
    <property type="pathway name" value="TNFR1-induced proapoptotic signaling"/>
</dbReference>
<dbReference type="Reactome" id="R-HSA-5357905">
    <property type="pathway name" value="Regulation of TNFR1 signaling"/>
</dbReference>
<dbReference type="Reactome" id="R-HSA-9013507">
    <property type="pathway name" value="NOTCH3 Activation and Transmission of Signal to the Nucleus"/>
</dbReference>
<dbReference type="Reactome" id="R-HSA-983168">
    <property type="pathway name" value="Antigen processing: Ubiquitination &amp; Proteasome degradation"/>
</dbReference>
<dbReference type="SignaLink" id="Q96AX9"/>
<dbReference type="SIGNOR" id="Q96AX9"/>
<dbReference type="UniPathway" id="UPA00143"/>
<dbReference type="BioGRID-ORCS" id="142678">
    <property type="hits" value="27 hits in 1192 CRISPR screens"/>
</dbReference>
<dbReference type="ChiTaRS" id="MIB2">
    <property type="organism name" value="human"/>
</dbReference>
<dbReference type="GeneWiki" id="MIB2_(gene)"/>
<dbReference type="GenomeRNAi" id="142678"/>
<dbReference type="Pharos" id="Q96AX9">
    <property type="development level" value="Tbio"/>
</dbReference>
<dbReference type="PRO" id="PR:Q96AX9"/>
<dbReference type="Proteomes" id="UP000005640">
    <property type="component" value="Chromosome 1"/>
</dbReference>
<dbReference type="RNAct" id="Q96AX9">
    <property type="molecule type" value="protein"/>
</dbReference>
<dbReference type="Bgee" id="ENSG00000197530">
    <property type="expression patterns" value="Expressed in granulocyte and 144 other cell types or tissues"/>
</dbReference>
<dbReference type="ExpressionAtlas" id="Q96AX9">
    <property type="expression patterns" value="baseline and differential"/>
</dbReference>
<dbReference type="GO" id="GO:0005737">
    <property type="term" value="C:cytoplasm"/>
    <property type="evidence" value="ECO:0000318"/>
    <property type="project" value="GO_Central"/>
</dbReference>
<dbReference type="GO" id="GO:0005829">
    <property type="term" value="C:cytosol"/>
    <property type="evidence" value="ECO:0000304"/>
    <property type="project" value="Reactome"/>
</dbReference>
<dbReference type="GO" id="GO:0005769">
    <property type="term" value="C:early endosome"/>
    <property type="evidence" value="ECO:0007669"/>
    <property type="project" value="Ensembl"/>
</dbReference>
<dbReference type="GO" id="GO:0005886">
    <property type="term" value="C:plasma membrane"/>
    <property type="evidence" value="ECO:0007669"/>
    <property type="project" value="Ensembl"/>
</dbReference>
<dbReference type="GO" id="GO:0000151">
    <property type="term" value="C:ubiquitin ligase complex"/>
    <property type="evidence" value="ECO:0007669"/>
    <property type="project" value="Ensembl"/>
</dbReference>
<dbReference type="GO" id="GO:0003779">
    <property type="term" value="F:actin binding"/>
    <property type="evidence" value="ECO:0007669"/>
    <property type="project" value="UniProtKB-KW"/>
</dbReference>
<dbReference type="GO" id="GO:0061630">
    <property type="term" value="F:ubiquitin protein ligase activity"/>
    <property type="evidence" value="ECO:0000318"/>
    <property type="project" value="GO_Central"/>
</dbReference>
<dbReference type="GO" id="GO:0004842">
    <property type="term" value="F:ubiquitin-protein transferase activity"/>
    <property type="evidence" value="ECO:0000269"/>
    <property type="project" value="Reactome"/>
</dbReference>
<dbReference type="GO" id="GO:0008270">
    <property type="term" value="F:zinc ion binding"/>
    <property type="evidence" value="ECO:0007669"/>
    <property type="project" value="UniProtKB-KW"/>
</dbReference>
<dbReference type="GO" id="GO:0007219">
    <property type="term" value="P:Notch signaling pathway"/>
    <property type="evidence" value="ECO:0007669"/>
    <property type="project" value="UniProtKB-KW"/>
</dbReference>
<dbReference type="GO" id="GO:0043123">
    <property type="term" value="P:positive regulation of canonical NF-kappaB signal transduction"/>
    <property type="evidence" value="ECO:0007001"/>
    <property type="project" value="UniProtKB"/>
</dbReference>
<dbReference type="GO" id="GO:0016567">
    <property type="term" value="P:protein ubiquitination"/>
    <property type="evidence" value="ECO:0000318"/>
    <property type="project" value="GO_Central"/>
</dbReference>
<dbReference type="GO" id="GO:0010803">
    <property type="term" value="P:regulation of tumor necrosis factor-mediated signaling pathway"/>
    <property type="evidence" value="ECO:0000304"/>
    <property type="project" value="Reactome"/>
</dbReference>
<dbReference type="CDD" id="cd16726">
    <property type="entry name" value="RING-HC_MIB2_rpt1"/>
    <property type="match status" value="1"/>
</dbReference>
<dbReference type="CDD" id="cd02339">
    <property type="entry name" value="ZZ_Mind_bomb"/>
    <property type="match status" value="1"/>
</dbReference>
<dbReference type="FunFam" id="1.25.40.20:FF:000075">
    <property type="entry name" value="E3 ubiquitin-protein ligase MIB2 isoform X1"/>
    <property type="match status" value="1"/>
</dbReference>
<dbReference type="FunFam" id="3.30.40.10:FF:000094">
    <property type="entry name" value="E3 ubiquitin-protein ligase MIB2 isoform X1"/>
    <property type="match status" value="1"/>
</dbReference>
<dbReference type="FunFam" id="3.30.40.10:FF:000250">
    <property type="entry name" value="E3 ubiquitin-protein ligase MIB2 isoform X2"/>
    <property type="match status" value="1"/>
</dbReference>
<dbReference type="FunFam" id="1.25.40.20:FF:000158">
    <property type="entry name" value="E3 ubiquitin-protein ligase MIB2 isoform X3"/>
    <property type="match status" value="1"/>
</dbReference>
<dbReference type="FunFam" id="2.30.30.40:FF:000044">
    <property type="entry name" value="E3 ubiquitin-protein ligase MIB2, putative"/>
    <property type="match status" value="1"/>
</dbReference>
<dbReference type="FunFam" id="3.30.60.90:FF:000004">
    <property type="entry name" value="Putative E3 ubiquitin-protein ligase MIB2"/>
    <property type="match status" value="1"/>
</dbReference>
<dbReference type="FunFam" id="2.30.30.40:FF:000078">
    <property type="entry name" value="Putative e3 ubiquitin-protein ligase mib2"/>
    <property type="match status" value="1"/>
</dbReference>
<dbReference type="Gene3D" id="3.30.60.90">
    <property type="match status" value="1"/>
</dbReference>
<dbReference type="Gene3D" id="1.25.40.20">
    <property type="entry name" value="Ankyrin repeat-containing domain"/>
    <property type="match status" value="3"/>
</dbReference>
<dbReference type="Gene3D" id="2.30.30.40">
    <property type="entry name" value="SH3 Domains"/>
    <property type="match status" value="2"/>
</dbReference>
<dbReference type="Gene3D" id="3.30.40.10">
    <property type="entry name" value="Zinc/RING finger domain, C3HC4 (zinc finger)"/>
    <property type="match status" value="2"/>
</dbReference>
<dbReference type="InterPro" id="IPR002110">
    <property type="entry name" value="Ankyrin_rpt"/>
</dbReference>
<dbReference type="InterPro" id="IPR036770">
    <property type="entry name" value="Ankyrin_rpt-contain_sf"/>
</dbReference>
<dbReference type="InterPro" id="IPR042056">
    <property type="entry name" value="MIB1/2_ZZ"/>
</dbReference>
<dbReference type="InterPro" id="IPR010606">
    <property type="entry name" value="Mib_Herc2"/>
</dbReference>
<dbReference type="InterPro" id="IPR037252">
    <property type="entry name" value="Mib_Herc2_sf"/>
</dbReference>
<dbReference type="InterPro" id="IPR040847">
    <property type="entry name" value="SH3_15"/>
</dbReference>
<dbReference type="InterPro" id="IPR001841">
    <property type="entry name" value="Znf_RING"/>
</dbReference>
<dbReference type="InterPro" id="IPR013083">
    <property type="entry name" value="Znf_RING/FYVE/PHD"/>
</dbReference>
<dbReference type="InterPro" id="IPR000433">
    <property type="entry name" value="Znf_ZZ"/>
</dbReference>
<dbReference type="InterPro" id="IPR043145">
    <property type="entry name" value="Znf_ZZ_sf"/>
</dbReference>
<dbReference type="PANTHER" id="PTHR24202">
    <property type="entry name" value="E3 UBIQUITIN-PROTEIN LIGASE MIB2"/>
    <property type="match status" value="1"/>
</dbReference>
<dbReference type="PANTHER" id="PTHR24202:SF4">
    <property type="entry name" value="E3 UBIQUITIN-PROTEIN LIGASE MIB2-RELATED"/>
    <property type="match status" value="1"/>
</dbReference>
<dbReference type="Pfam" id="PF00023">
    <property type="entry name" value="Ank"/>
    <property type="match status" value="2"/>
</dbReference>
<dbReference type="Pfam" id="PF12796">
    <property type="entry name" value="Ank_2"/>
    <property type="match status" value="2"/>
</dbReference>
<dbReference type="Pfam" id="PF06701">
    <property type="entry name" value="MIB_HERC2"/>
    <property type="match status" value="2"/>
</dbReference>
<dbReference type="Pfam" id="PF18346">
    <property type="entry name" value="SH3_15"/>
    <property type="match status" value="2"/>
</dbReference>
<dbReference type="Pfam" id="PF13920">
    <property type="entry name" value="zf-C3HC4_3"/>
    <property type="match status" value="2"/>
</dbReference>
<dbReference type="Pfam" id="PF00569">
    <property type="entry name" value="ZZ"/>
    <property type="match status" value="1"/>
</dbReference>
<dbReference type="PRINTS" id="PR01415">
    <property type="entry name" value="ANKYRIN"/>
</dbReference>
<dbReference type="SMART" id="SM00248">
    <property type="entry name" value="ANK"/>
    <property type="match status" value="9"/>
</dbReference>
<dbReference type="SMART" id="SM00184">
    <property type="entry name" value="RING"/>
    <property type="match status" value="2"/>
</dbReference>
<dbReference type="SMART" id="SM00291">
    <property type="entry name" value="ZnF_ZZ"/>
    <property type="match status" value="1"/>
</dbReference>
<dbReference type="SUPFAM" id="SSF48403">
    <property type="entry name" value="Ankyrin repeat"/>
    <property type="match status" value="1"/>
</dbReference>
<dbReference type="SUPFAM" id="SSF159034">
    <property type="entry name" value="Mib/herc2 domain-like"/>
    <property type="match status" value="2"/>
</dbReference>
<dbReference type="SUPFAM" id="SSF57850">
    <property type="entry name" value="RING/U-box"/>
    <property type="match status" value="2"/>
</dbReference>
<dbReference type="PROSITE" id="PS50297">
    <property type="entry name" value="ANK_REP_REGION"/>
    <property type="match status" value="1"/>
</dbReference>
<dbReference type="PROSITE" id="PS50088">
    <property type="entry name" value="ANK_REPEAT"/>
    <property type="match status" value="5"/>
</dbReference>
<dbReference type="PROSITE" id="PS51416">
    <property type="entry name" value="MIB_HERC2"/>
    <property type="match status" value="2"/>
</dbReference>
<dbReference type="PROSITE" id="PS50089">
    <property type="entry name" value="ZF_RING_2"/>
    <property type="match status" value="2"/>
</dbReference>
<dbReference type="PROSITE" id="PS01357">
    <property type="entry name" value="ZF_ZZ_1"/>
    <property type="match status" value="1"/>
</dbReference>
<dbReference type="PROSITE" id="PS50135">
    <property type="entry name" value="ZF_ZZ_2"/>
    <property type="match status" value="1"/>
</dbReference>
<sequence>MDPDPQAGVQVGMRVVRGVDWKWGQQDGGEGGVGTVVELGRHGSPSTPDRTVVVQWDQGTRTNYRAGYQGAHDLLLYDNAQIGVRHPNIICDCCKKHGLRGMRWKCRVCLDYDLCTQCYMHNKHELAHAFDRYETAHSRPVTLSPRQGLPRIPLRGIFQGAKVVRGPDWEWGSQDGGEGKPGRVVDIRGWDVETGRSVASVTWADGTTNVYRVGHKGKVDLKCVGEAAGGFYYKDHLPRLGKPAELQRRVSADSQPFQHGDKVKCLLDTDVLREMQEGHGGWNPRMAEFIGQTGTVHRITDRGDVRVQFNHETRWTFHPGALTKHHSFWVGDVVRVIGDLDTVKRLQAGHGEWTDDMAPALGRVGKVVKVFGDGNLRVAVAGQRWTFSPSCLVAYRPEEDANLDVAERARENKSSLSVALDKLRAQKSDPEHPGRLVVEVALGNAARALDLLRRRPEQVDTKNQGRTALQVAAYLGQVELIRLLLQARAGVDLPDDEGNTALHYAALGNQPEATRVLLSAGCRADAINSTQSTALHVAVQRGFLEVVRALCERGCDVNLPDAHSDTPLHSAISAGTGASGIVEVLTEVPNIDVTATNSQGFTLLHHASLKGHALAVRKILARARQLVDAKKEDGFTALHLAALNNHREVAQILIREGRCDVNVRNRKLQSPLHLAVQQAHVGLVPLLVDAGCSVNAEDEEGDTALHVALQRHQLLPLVADGAGGDPGPLQLLSRLQASGLPGSAELTVGAAVACFLALEGADVSYTNHRGRSPLDLAAEGRVLKALQGCAQRFRERQAGGGAAPGPRQTLGTPNTVTNLHVGAAPGPEAAECLVCSELALLVLFSPCQHRTVCEECARRMKKCIRCQVVVSKKLRPDGSEVASAAPAPGPPRQLVEELQSRYRQMEERITCPICIDSHIRLVFQCGHGACAPCGSALSACPICRQPIRDRIQIFV</sequence>
<accession>Q96AX9</accession>
<accession>A2AGM5</accession>
<accession>A2AGM6</accession>
<accession>B3KV93</accession>
<accession>B3KVF4</accession>
<accession>B3KXY1</accession>
<accession>B4DZ57</accession>
<accession>E9PGU1</accession>
<accession>E9PHQ1</accession>
<accession>F8WA73</accession>
<accession>J3KNZ7</accession>
<accession>Q7Z437</accession>
<accession>Q8IY62</accession>
<accession>Q8N786</accession>
<accession>Q8N897</accession>
<accession>Q8N8R2</accession>
<accession>Q8N911</accession>
<accession>Q8NB36</accession>
<accession>Q8NCY1</accession>
<accession>Q8NG59</accession>
<accession>Q8NG60</accession>
<accession>Q8NG61</accession>
<accession>Q8NI59</accession>
<accession>Q8WYN1</accession>
<reference key="1">
    <citation type="journal article" date="2003" name="Am. J. Pathol.">
        <title>Down-regulation of a novel actin-binding molecule, skeletrophin, in malignant melanoma.</title>
        <authorList>
            <person name="Takeuchi T."/>
            <person name="Heng H.H.Q."/>
            <person name="Ye C.J."/>
            <person name="Liang S.-B."/>
            <person name="Iwata J."/>
            <person name="Sonobe H."/>
            <person name="Ohtsuki Y."/>
        </authorList>
    </citation>
    <scope>NUCLEOTIDE SEQUENCE [MRNA] (ISOFORM 1)</scope>
    <scope>SUBCELLULAR LOCATION</scope>
    <scope>TISSUE SPECIFICITY</scope>
    <scope>INDUCTION</scope>
    <scope>INTERACTION WITH ACTIN</scope>
</reference>
<reference key="2">
    <citation type="submission" date="2002-06" db="EMBL/GenBank/DDBJ databases">
        <title>A novel zinc finger protein.</title>
        <authorList>
            <person name="Takeuchi T."/>
        </authorList>
    </citation>
    <scope>NUCLEOTIDE SEQUENCE [MRNA] (ISOFORMS 1; 3 AND 4)</scope>
</reference>
<reference key="3">
    <citation type="journal article" date="2003" name="Oncogene">
        <title>Large-scale identification and characterization of human genes that activate NF-kappaB and MAPK signaling pathways.</title>
        <authorList>
            <person name="Matsuda A."/>
            <person name="Suzuki Y."/>
            <person name="Honda G."/>
            <person name="Muramatsu S."/>
            <person name="Matsuzaki O."/>
            <person name="Nagano Y."/>
            <person name="Doi T."/>
            <person name="Shimotohno K."/>
            <person name="Harada T."/>
            <person name="Nishida E."/>
            <person name="Hayashi H."/>
            <person name="Sugano S."/>
        </authorList>
    </citation>
    <scope>NUCLEOTIDE SEQUENCE [LARGE SCALE MRNA] (ISOFORM 1)</scope>
    <source>
        <tissue>Lung fibroblast</tissue>
    </source>
</reference>
<reference key="4">
    <citation type="journal article" date="2004" name="Nat. Genet.">
        <title>Complete sequencing and characterization of 21,243 full-length human cDNAs.</title>
        <authorList>
            <person name="Ota T."/>
            <person name="Suzuki Y."/>
            <person name="Nishikawa T."/>
            <person name="Otsuki T."/>
            <person name="Sugiyama T."/>
            <person name="Irie R."/>
            <person name="Wakamatsu A."/>
            <person name="Hayashi K."/>
            <person name="Sato H."/>
            <person name="Nagai K."/>
            <person name="Kimura K."/>
            <person name="Makita H."/>
            <person name="Sekine M."/>
            <person name="Obayashi M."/>
            <person name="Nishi T."/>
            <person name="Shibahara T."/>
            <person name="Tanaka T."/>
            <person name="Ishii S."/>
            <person name="Yamamoto J."/>
            <person name="Saito K."/>
            <person name="Kawai Y."/>
            <person name="Isono Y."/>
            <person name="Nakamura Y."/>
            <person name="Nagahari K."/>
            <person name="Murakami K."/>
            <person name="Yasuda T."/>
            <person name="Iwayanagi T."/>
            <person name="Wagatsuma M."/>
            <person name="Shiratori A."/>
            <person name="Sudo H."/>
            <person name="Hosoiri T."/>
            <person name="Kaku Y."/>
            <person name="Kodaira H."/>
            <person name="Kondo H."/>
            <person name="Sugawara M."/>
            <person name="Takahashi M."/>
            <person name="Kanda K."/>
            <person name="Yokoi T."/>
            <person name="Furuya T."/>
            <person name="Kikkawa E."/>
            <person name="Omura Y."/>
            <person name="Abe K."/>
            <person name="Kamihara K."/>
            <person name="Katsuta N."/>
            <person name="Sato K."/>
            <person name="Tanikawa M."/>
            <person name="Yamazaki M."/>
            <person name="Ninomiya K."/>
            <person name="Ishibashi T."/>
            <person name="Yamashita H."/>
            <person name="Murakawa K."/>
            <person name="Fujimori K."/>
            <person name="Tanai H."/>
            <person name="Kimata M."/>
            <person name="Watanabe M."/>
            <person name="Hiraoka S."/>
            <person name="Chiba Y."/>
            <person name="Ishida S."/>
            <person name="Ono Y."/>
            <person name="Takiguchi S."/>
            <person name="Watanabe S."/>
            <person name="Yosida M."/>
            <person name="Hotuta T."/>
            <person name="Kusano J."/>
            <person name="Kanehori K."/>
            <person name="Takahashi-Fujii A."/>
            <person name="Hara H."/>
            <person name="Tanase T.-O."/>
            <person name="Nomura Y."/>
            <person name="Togiya S."/>
            <person name="Komai F."/>
            <person name="Hara R."/>
            <person name="Takeuchi K."/>
            <person name="Arita M."/>
            <person name="Imose N."/>
            <person name="Musashino K."/>
            <person name="Yuuki H."/>
            <person name="Oshima A."/>
            <person name="Sasaki N."/>
            <person name="Aotsuka S."/>
            <person name="Yoshikawa Y."/>
            <person name="Matsunawa H."/>
            <person name="Ichihara T."/>
            <person name="Shiohata N."/>
            <person name="Sano S."/>
            <person name="Moriya S."/>
            <person name="Momiyama H."/>
            <person name="Satoh N."/>
            <person name="Takami S."/>
            <person name="Terashima Y."/>
            <person name="Suzuki O."/>
            <person name="Nakagawa S."/>
            <person name="Senoh A."/>
            <person name="Mizoguchi H."/>
            <person name="Goto Y."/>
            <person name="Shimizu F."/>
            <person name="Wakebe H."/>
            <person name="Hishigaki H."/>
            <person name="Watanabe T."/>
            <person name="Sugiyama A."/>
            <person name="Takemoto M."/>
            <person name="Kawakami B."/>
            <person name="Yamazaki M."/>
            <person name="Watanabe K."/>
            <person name="Kumagai A."/>
            <person name="Itakura S."/>
            <person name="Fukuzumi Y."/>
            <person name="Fujimori Y."/>
            <person name="Komiyama M."/>
            <person name="Tashiro H."/>
            <person name="Tanigami A."/>
            <person name="Fujiwara T."/>
            <person name="Ono T."/>
            <person name="Yamada K."/>
            <person name="Fujii Y."/>
            <person name="Ozaki K."/>
            <person name="Hirao M."/>
            <person name="Ohmori Y."/>
            <person name="Kawabata A."/>
            <person name="Hikiji T."/>
            <person name="Kobatake N."/>
            <person name="Inagaki H."/>
            <person name="Ikema Y."/>
            <person name="Okamoto S."/>
            <person name="Okitani R."/>
            <person name="Kawakami T."/>
            <person name="Noguchi S."/>
            <person name="Itoh T."/>
            <person name="Shigeta K."/>
            <person name="Senba T."/>
            <person name="Matsumura K."/>
            <person name="Nakajima Y."/>
            <person name="Mizuno T."/>
            <person name="Morinaga M."/>
            <person name="Sasaki M."/>
            <person name="Togashi T."/>
            <person name="Oyama M."/>
            <person name="Hata H."/>
            <person name="Watanabe M."/>
            <person name="Komatsu T."/>
            <person name="Mizushima-Sugano J."/>
            <person name="Satoh T."/>
            <person name="Shirai Y."/>
            <person name="Takahashi Y."/>
            <person name="Nakagawa K."/>
            <person name="Okumura K."/>
            <person name="Nagase T."/>
            <person name="Nomura N."/>
            <person name="Kikuchi H."/>
            <person name="Masuho Y."/>
            <person name="Yamashita R."/>
            <person name="Nakai K."/>
            <person name="Yada T."/>
            <person name="Nakamura Y."/>
            <person name="Ohara O."/>
            <person name="Isogai T."/>
            <person name="Sugano S."/>
        </authorList>
    </citation>
    <scope>NUCLEOTIDE SEQUENCE [LARGE SCALE MRNA] (ISOFORMS 1; 7; 8; 9 AND 10)</scope>
    <scope>NUCLEOTIDE SEQUENCE [LARGE SCALE MRNA] OF 93-955 (ISOFORM 5)</scope>
    <scope>NUCLEOTIDE SEQUENCE [LARGE SCALE MRNA] OF 234-955 (ISOFORM 6)</scope>
    <source>
        <tissue>Brain</tissue>
        <tissue>Heart</tissue>
        <tissue>Spleen</tissue>
        <tissue>Teratocarcinoma</tissue>
        <tissue>Testis</tissue>
        <tissue>Tongue</tissue>
    </source>
</reference>
<reference key="5">
    <citation type="journal article" date="2006" name="Nature">
        <title>The DNA sequence and biological annotation of human chromosome 1.</title>
        <authorList>
            <person name="Gregory S.G."/>
            <person name="Barlow K.F."/>
            <person name="McLay K.E."/>
            <person name="Kaul R."/>
            <person name="Swarbreck D."/>
            <person name="Dunham A."/>
            <person name="Scott C.E."/>
            <person name="Howe K.L."/>
            <person name="Woodfine K."/>
            <person name="Spencer C.C.A."/>
            <person name="Jones M.C."/>
            <person name="Gillson C."/>
            <person name="Searle S."/>
            <person name="Zhou Y."/>
            <person name="Kokocinski F."/>
            <person name="McDonald L."/>
            <person name="Evans R."/>
            <person name="Phillips K."/>
            <person name="Atkinson A."/>
            <person name="Cooper R."/>
            <person name="Jones C."/>
            <person name="Hall R.E."/>
            <person name="Andrews T.D."/>
            <person name="Lloyd C."/>
            <person name="Ainscough R."/>
            <person name="Almeida J.P."/>
            <person name="Ambrose K.D."/>
            <person name="Anderson F."/>
            <person name="Andrew R.W."/>
            <person name="Ashwell R.I.S."/>
            <person name="Aubin K."/>
            <person name="Babbage A.K."/>
            <person name="Bagguley C.L."/>
            <person name="Bailey J."/>
            <person name="Beasley H."/>
            <person name="Bethel G."/>
            <person name="Bird C.P."/>
            <person name="Bray-Allen S."/>
            <person name="Brown J.Y."/>
            <person name="Brown A.J."/>
            <person name="Buckley D."/>
            <person name="Burton J."/>
            <person name="Bye J."/>
            <person name="Carder C."/>
            <person name="Chapman J.C."/>
            <person name="Clark S.Y."/>
            <person name="Clarke G."/>
            <person name="Clee C."/>
            <person name="Cobley V."/>
            <person name="Collier R.E."/>
            <person name="Corby N."/>
            <person name="Coville G.J."/>
            <person name="Davies J."/>
            <person name="Deadman R."/>
            <person name="Dunn M."/>
            <person name="Earthrowl M."/>
            <person name="Ellington A.G."/>
            <person name="Errington H."/>
            <person name="Frankish A."/>
            <person name="Frankland J."/>
            <person name="French L."/>
            <person name="Garner P."/>
            <person name="Garnett J."/>
            <person name="Gay L."/>
            <person name="Ghori M.R.J."/>
            <person name="Gibson R."/>
            <person name="Gilby L.M."/>
            <person name="Gillett W."/>
            <person name="Glithero R.J."/>
            <person name="Grafham D.V."/>
            <person name="Griffiths C."/>
            <person name="Griffiths-Jones S."/>
            <person name="Grocock R."/>
            <person name="Hammond S."/>
            <person name="Harrison E.S.I."/>
            <person name="Hart E."/>
            <person name="Haugen E."/>
            <person name="Heath P.D."/>
            <person name="Holmes S."/>
            <person name="Holt K."/>
            <person name="Howden P.J."/>
            <person name="Hunt A.R."/>
            <person name="Hunt S.E."/>
            <person name="Hunter G."/>
            <person name="Isherwood J."/>
            <person name="James R."/>
            <person name="Johnson C."/>
            <person name="Johnson D."/>
            <person name="Joy A."/>
            <person name="Kay M."/>
            <person name="Kershaw J.K."/>
            <person name="Kibukawa M."/>
            <person name="Kimberley A.M."/>
            <person name="King A."/>
            <person name="Knights A.J."/>
            <person name="Lad H."/>
            <person name="Laird G."/>
            <person name="Lawlor S."/>
            <person name="Leongamornlert D.A."/>
            <person name="Lloyd D.M."/>
            <person name="Loveland J."/>
            <person name="Lovell J."/>
            <person name="Lush M.J."/>
            <person name="Lyne R."/>
            <person name="Martin S."/>
            <person name="Mashreghi-Mohammadi M."/>
            <person name="Matthews L."/>
            <person name="Matthews N.S.W."/>
            <person name="McLaren S."/>
            <person name="Milne S."/>
            <person name="Mistry S."/>
            <person name="Moore M.J.F."/>
            <person name="Nickerson T."/>
            <person name="O'Dell C.N."/>
            <person name="Oliver K."/>
            <person name="Palmeiri A."/>
            <person name="Palmer S.A."/>
            <person name="Parker A."/>
            <person name="Patel D."/>
            <person name="Pearce A.V."/>
            <person name="Peck A.I."/>
            <person name="Pelan S."/>
            <person name="Phelps K."/>
            <person name="Phillimore B.J."/>
            <person name="Plumb R."/>
            <person name="Rajan J."/>
            <person name="Raymond C."/>
            <person name="Rouse G."/>
            <person name="Saenphimmachak C."/>
            <person name="Sehra H.K."/>
            <person name="Sheridan E."/>
            <person name="Shownkeen R."/>
            <person name="Sims S."/>
            <person name="Skuce C.D."/>
            <person name="Smith M."/>
            <person name="Steward C."/>
            <person name="Subramanian S."/>
            <person name="Sycamore N."/>
            <person name="Tracey A."/>
            <person name="Tromans A."/>
            <person name="Van Helmond Z."/>
            <person name="Wall M."/>
            <person name="Wallis J.M."/>
            <person name="White S."/>
            <person name="Whitehead S.L."/>
            <person name="Wilkinson J.E."/>
            <person name="Willey D.L."/>
            <person name="Williams H."/>
            <person name="Wilming L."/>
            <person name="Wray P.W."/>
            <person name="Wu Z."/>
            <person name="Coulson A."/>
            <person name="Vaudin M."/>
            <person name="Sulston J.E."/>
            <person name="Durbin R.M."/>
            <person name="Hubbard T."/>
            <person name="Wooster R."/>
            <person name="Dunham I."/>
            <person name="Carter N.P."/>
            <person name="McVean G."/>
            <person name="Ross M.T."/>
            <person name="Harrow J."/>
            <person name="Olson M.V."/>
            <person name="Beck S."/>
            <person name="Rogers J."/>
            <person name="Bentley D.R."/>
        </authorList>
    </citation>
    <scope>NUCLEOTIDE SEQUENCE [LARGE SCALE GENOMIC DNA]</scope>
</reference>
<reference key="6">
    <citation type="journal article" date="2004" name="Genome Res.">
        <title>The status, quality, and expansion of the NIH full-length cDNA project: the Mammalian Gene Collection (MGC).</title>
        <authorList>
            <consortium name="The MGC Project Team"/>
        </authorList>
    </citation>
    <scope>NUCLEOTIDE SEQUENCE [LARGE SCALE MRNA] (ISOFORM 1)</scope>
    <source>
        <tissue>Brain</tissue>
        <tissue>Lymph</tissue>
    </source>
</reference>
<reference key="7">
    <citation type="journal article" date="2007" name="BMC Genomics">
        <title>The full-ORF clone resource of the German cDNA consortium.</title>
        <authorList>
            <person name="Bechtel S."/>
            <person name="Rosenfelder H."/>
            <person name="Duda A."/>
            <person name="Schmidt C.P."/>
            <person name="Ernst U."/>
            <person name="Wellenreuther R."/>
            <person name="Mehrle A."/>
            <person name="Schuster C."/>
            <person name="Bahr A."/>
            <person name="Bloecker H."/>
            <person name="Heubner D."/>
            <person name="Hoerlein A."/>
            <person name="Michel G."/>
            <person name="Wedler H."/>
            <person name="Koehrer K."/>
            <person name="Ottenwaelder B."/>
            <person name="Poustka A."/>
            <person name="Wiemann S."/>
            <person name="Schupp I."/>
        </authorList>
    </citation>
    <scope>NUCLEOTIDE SEQUENCE [LARGE SCALE MRNA] OF 194-955 (ISOFORM 1)</scope>
    <source>
        <tissue>Testis</tissue>
    </source>
</reference>
<reference key="8">
    <citation type="journal article" date="2012" name="Proc. Natl. Acad. Sci. U.S.A.">
        <title>N-terminal acetylome analyses and functional insights of the N-terminal acetyltransferase NatB.</title>
        <authorList>
            <person name="Van Damme P."/>
            <person name="Lasa M."/>
            <person name="Polevoda B."/>
            <person name="Gazquez C."/>
            <person name="Elosegui-Artola A."/>
            <person name="Kim D.S."/>
            <person name="De Juan-Pardo E."/>
            <person name="Demeyer K."/>
            <person name="Hole K."/>
            <person name="Larrea E."/>
            <person name="Timmerman E."/>
            <person name="Prieto J."/>
            <person name="Arnesen T."/>
            <person name="Sherman F."/>
            <person name="Gevaert K."/>
            <person name="Aldabe R."/>
        </authorList>
    </citation>
    <scope>ACETYLATION [LARGE SCALE ANALYSIS] AT MET-1 (ISOFORMS 10 AND 8)</scope>
    <scope>IDENTIFICATION BY MASS SPECTROMETRY [LARGE SCALE ANALYSIS]</scope>
</reference>
<reference key="9">
    <citation type="journal article" date="2013" name="J. Proteome Res.">
        <title>Toward a comprehensive characterization of a human cancer cell phosphoproteome.</title>
        <authorList>
            <person name="Zhou H."/>
            <person name="Di Palma S."/>
            <person name="Preisinger C."/>
            <person name="Peng M."/>
            <person name="Polat A.N."/>
            <person name="Heck A.J."/>
            <person name="Mohammed S."/>
        </authorList>
    </citation>
    <scope>PHOSPHORYLATION [LARGE SCALE ANALYSIS] AT SER-251</scope>
    <scope>IDENTIFICATION BY MASS SPECTROMETRY [LARGE SCALE ANALYSIS]</scope>
    <source>
        <tissue>Cervix carcinoma</tissue>
        <tissue>Erythroleukemia</tissue>
    </source>
</reference>
<reference key="10">
    <citation type="journal article" date="2014" name="J. Proteomics">
        <title>An enzyme assisted RP-RPLC approach for in-depth analysis of human liver phosphoproteome.</title>
        <authorList>
            <person name="Bian Y."/>
            <person name="Song C."/>
            <person name="Cheng K."/>
            <person name="Dong M."/>
            <person name="Wang F."/>
            <person name="Huang J."/>
            <person name="Sun D."/>
            <person name="Wang L."/>
            <person name="Ye M."/>
            <person name="Zou H."/>
        </authorList>
    </citation>
    <scope>PHOSPHORYLATION [LARGE SCALE ANALYSIS] AT SER-251</scope>
    <scope>IDENTIFICATION BY MASS SPECTROMETRY [LARGE SCALE ANALYSIS]</scope>
    <source>
        <tissue>Liver</tissue>
    </source>
</reference>
<gene>
    <name evidence="10" type="primary">MIB2</name>
    <name type="synonym">SKD</name>
    <name type="synonym">ZZANK1</name>
</gene>
<keyword id="KW-0007">Acetylation</keyword>
<keyword id="KW-0009">Actin-binding</keyword>
<keyword id="KW-0025">Alternative splicing</keyword>
<keyword id="KW-0040">ANK repeat</keyword>
<keyword id="KW-0963">Cytoplasm</keyword>
<keyword id="KW-0967">Endosome</keyword>
<keyword id="KW-0479">Metal-binding</keyword>
<keyword id="KW-0914">Notch signaling pathway</keyword>
<keyword id="KW-0597">Phosphoprotein</keyword>
<keyword id="KW-1267">Proteomics identification</keyword>
<keyword id="KW-1185">Reference proteome</keyword>
<keyword id="KW-0677">Repeat</keyword>
<keyword id="KW-0808">Transferase</keyword>
<keyword id="KW-0832">Ubl conjugation</keyword>
<keyword id="KW-0833">Ubl conjugation pathway</keyword>
<keyword id="KW-0862">Zinc</keyword>
<keyword id="KW-0863">Zinc-finger</keyword>
<comment type="function">
    <text evidence="2">E3 ubiquitin-protein ligase that mediates ubiquitination of Delta receptors, which act as ligands of Notch proteins. Positively regulates the Delta-mediated Notch signaling by ubiquitinating the intracellular domain of Delta, leading to endocytosis of Delta receptors.</text>
</comment>
<comment type="catalytic activity">
    <reaction>
        <text>S-ubiquitinyl-[E2 ubiquitin-conjugating enzyme]-L-cysteine + [acceptor protein]-L-lysine = [E2 ubiquitin-conjugating enzyme]-L-cysteine + N(6)-ubiquitinyl-[acceptor protein]-L-lysine.</text>
        <dbReference type="EC" id="2.3.2.27"/>
    </reaction>
</comment>
<comment type="pathway">
    <text>Protein modification; protein ubiquitination.</text>
</comment>
<comment type="subunit">
    <text evidence="6">Interacts with actin monomer.</text>
</comment>
<comment type="interaction">
    <interactant intactId="EBI-2130249">
        <id>Q96AX9</id>
    </interactant>
    <interactant intactId="EBI-356402">
        <id>Q9UHD2</id>
        <label>TBK1</label>
    </interactant>
    <organismsDiffer>false</organismsDiffer>
    <experiments>2</experiments>
</comment>
<comment type="subcellular location">
    <subcellularLocation>
        <location evidence="6">Cytoplasm</location>
    </subcellularLocation>
    <subcellularLocation>
        <location evidence="6">Endosome</location>
    </subcellularLocation>
    <text>Colocalizes with endosomal compartments.</text>
</comment>
<comment type="alternative products">
    <event type="alternative splicing"/>
    <isoform>
        <id>Q96AX9-1</id>
        <name>1</name>
        <sequence type="displayed"/>
    </isoform>
    <isoform>
        <id>Q96AX9-3</id>
        <name>3</name>
        <name>Gamma</name>
        <sequence type="described" ref="VSP_014395"/>
    </isoform>
    <isoform>
        <id>Q96AX9-4</id>
        <name>4</name>
        <name>Beta</name>
        <sequence type="described" ref="VSP_014393"/>
    </isoform>
    <isoform>
        <id>Q96AX9-5</id>
        <name>5</name>
        <sequence type="described" ref="VSP_014396"/>
    </isoform>
    <isoform>
        <id>Q96AX9-10</id>
        <name>10</name>
        <sequence type="described" ref="VSP_014393 VSP_045186"/>
    </isoform>
    <isoform>
        <id>Q96AX9-7</id>
        <name>7</name>
        <sequence type="described" ref="VSP_035508"/>
    </isoform>
    <isoform>
        <id>Q96AX9-8</id>
        <name>8</name>
        <sequence type="described" ref="VSP_035511 VSP_035512"/>
    </isoform>
    <isoform>
        <id>Q96AX9-9</id>
        <name>9</name>
        <sequence type="described" ref="VSP_035510"/>
    </isoform>
    <isoform>
        <id>Q96AX9-6</id>
        <name>6</name>
        <sequence type="described" ref="VSP_014394"/>
    </isoform>
</comment>
<comment type="tissue specificity">
    <text evidence="6">Expressed in skeletal muscle, and to a lesser extent in heart, brain and kidney.</text>
</comment>
<comment type="induction">
    <text evidence="6">Down-regulated in many primary skin melanomas. Treatment with a demethylating agent, 5'-aza-2-deoxycytidine, restores expression, suggesting that down-regulation is the result of methylation of the gene.</text>
</comment>
<comment type="PTM">
    <text evidence="1">Ubiquitinated. Possibly via autoubiquitination (By similarity).</text>
</comment>
<comment type="sequence caution" evidence="9">
    <conflict type="erroneous initiation">
        <sequence resource="EMBL-CDS" id="AAH16490"/>
    </conflict>
    <text>Extended N-terminus.</text>
</comment>
<comment type="sequence caution" evidence="9">
    <conflict type="erroneous initiation">
        <sequence resource="EMBL-CDS" id="AAH37542"/>
    </conflict>
    <text>Extended N-terminus.</text>
</comment>
<comment type="sequence caution" evidence="9">
    <conflict type="frameshift">
        <sequence resource="EMBL-CDS" id="BAB82979"/>
    </conflict>
</comment>
<comment type="sequence caution" evidence="9">
    <conflict type="erroneous initiation">
        <sequence resource="EMBL-CDS" id="BAB92950"/>
    </conflict>
    <text>Extended N-terminus.</text>
</comment>
<comment type="sequence caution" evidence="9">
    <conflict type="erroneous initiation">
        <sequence resource="EMBL-CDS" id="BAC00992"/>
    </conflict>
    <text>Extended N-terminus.</text>
</comment>
<comment type="sequence caution" evidence="9">
    <conflict type="erroneous initiation">
        <sequence resource="EMBL-CDS" id="BAC00993"/>
    </conflict>
    <text>Extended N-terminus.</text>
</comment>
<comment type="sequence caution" evidence="9">
    <conflict type="erroneous initiation">
        <sequence resource="EMBL-CDS" id="BAC00994"/>
    </conflict>
    <text>Extended N-terminus.</text>
</comment>
<comment type="sequence caution" evidence="9">
    <conflict type="erroneous initiation">
        <sequence resource="EMBL-CDS" id="BAC03707"/>
    </conflict>
    <text>Truncated N-terminus.</text>
</comment>
<comment type="sequence caution" evidence="9">
    <conflict type="erroneous initiation">
        <sequence resource="EMBL-CDS" id="BAC04646"/>
    </conflict>
    <text>Truncated N-terminus.</text>
</comment>
<comment type="sequence caution" evidence="9">
    <conflict type="erroneous initiation">
        <sequence resource="EMBL-CDS" id="BAC04752"/>
    </conflict>
    <text>Truncated N-terminus.</text>
</comment>
<comment type="sequence caution" evidence="9">
    <conflict type="erroneous initiation">
        <sequence resource="EMBL-CDS" id="BAC04952"/>
    </conflict>
    <text>Truncated N-terminus.</text>
</comment>
<comment type="sequence caution" evidence="9">
    <conflict type="erroneous initiation">
        <sequence resource="EMBL-CDS" id="BAC77353"/>
    </conflict>
    <text>Extended N-terminus.</text>
</comment>
<comment type="sequence caution" evidence="9">
    <conflict type="erroneous initiation">
        <sequence resource="EMBL-CDS" id="BAG53766"/>
    </conflict>
    <text>Extended N-terminus.</text>
</comment>
<comment type="sequence caution" evidence="9">
    <conflict type="erroneous initiation">
        <sequence resource="EMBL-CDS" id="BAG63969"/>
    </conflict>
    <text>Extended N-terminus.</text>
</comment>
<comment type="online information" name="Atlas of Genetics and Cytogenetics in Oncology and Haematology">
    <link uri="https://atlasgeneticsoncology.org/gene/44179/MIB2"/>
</comment>
<protein>
    <recommendedName>
        <fullName evidence="9">E3 ubiquitin-protein ligase MIB2</fullName>
        <ecNumber>2.3.2.27</ecNumber>
    </recommendedName>
    <alternativeName>
        <fullName>Mind bomb homolog 2</fullName>
    </alternativeName>
    <alternativeName>
        <fullName>Novel zinc finger protein</fullName>
        <shortName>Novelzin</shortName>
    </alternativeName>
    <alternativeName>
        <fullName>Putative NF-kappa-B-activating protein 002N</fullName>
    </alternativeName>
    <alternativeName>
        <fullName evidence="9">RING-type E3 ubiquitin transferase MIB2</fullName>
    </alternativeName>
    <alternativeName>
        <fullName>Skeletrophin</fullName>
    </alternativeName>
    <alternativeName>
        <fullName>Zinc finger ZZ type with ankyrin repeat domain protein 1</fullName>
    </alternativeName>
</protein>
<proteinExistence type="evidence at protein level"/>
<evidence type="ECO:0000250" key="1"/>
<evidence type="ECO:0000250" key="2">
    <source>
        <dbReference type="UniProtKB" id="Q8R516"/>
    </source>
</evidence>
<evidence type="ECO:0000255" key="3">
    <source>
        <dbReference type="PROSITE-ProRule" id="PRU00175"/>
    </source>
</evidence>
<evidence type="ECO:0000255" key="4">
    <source>
        <dbReference type="PROSITE-ProRule" id="PRU00228"/>
    </source>
</evidence>
<evidence type="ECO:0000255" key="5">
    <source>
        <dbReference type="PROSITE-ProRule" id="PRU00749"/>
    </source>
</evidence>
<evidence type="ECO:0000269" key="6">
    <source>
    </source>
</evidence>
<evidence type="ECO:0000303" key="7">
    <source>
    </source>
</evidence>
<evidence type="ECO:0000303" key="8">
    <source ref="2"/>
</evidence>
<evidence type="ECO:0000305" key="9"/>
<evidence type="ECO:0000312" key="10">
    <source>
        <dbReference type="HGNC" id="HGNC:30577"/>
    </source>
</evidence>
<evidence type="ECO:0007744" key="11">
    <source>
    </source>
</evidence>
<evidence type="ECO:0007744" key="12">
    <source>
    </source>
</evidence>
<evidence type="ECO:0007744" key="13">
    <source>
    </source>
</evidence>
<name>MIB2_HUMAN</name>
<organism>
    <name type="scientific">Homo sapiens</name>
    <name type="common">Human</name>
    <dbReference type="NCBI Taxonomy" id="9606"/>
    <lineage>
        <taxon>Eukaryota</taxon>
        <taxon>Metazoa</taxon>
        <taxon>Chordata</taxon>
        <taxon>Craniata</taxon>
        <taxon>Vertebrata</taxon>
        <taxon>Euteleostomi</taxon>
        <taxon>Mammalia</taxon>
        <taxon>Eutheria</taxon>
        <taxon>Euarchontoglires</taxon>
        <taxon>Primates</taxon>
        <taxon>Haplorrhini</taxon>
        <taxon>Catarrhini</taxon>
        <taxon>Hominidae</taxon>
        <taxon>Homo</taxon>
    </lineage>
</organism>
<feature type="chain" id="PRO_0000055947" description="E3 ubiquitin-protein ligase MIB2">
    <location>
        <begin position="1"/>
        <end position="955"/>
    </location>
</feature>
<feature type="domain" description="MIB/HERC2 1" evidence="5">
    <location>
        <begin position="1"/>
        <end position="80"/>
    </location>
</feature>
<feature type="domain" description="MIB/HERC2 2" evidence="5">
    <location>
        <begin position="149"/>
        <end position="227"/>
    </location>
</feature>
<feature type="repeat" description="ANK 1">
    <location>
        <begin position="464"/>
        <end position="493"/>
    </location>
</feature>
<feature type="repeat" description="ANK 2">
    <location>
        <begin position="497"/>
        <end position="526"/>
    </location>
</feature>
<feature type="repeat" description="ANK 3">
    <location>
        <begin position="530"/>
        <end position="559"/>
    </location>
</feature>
<feature type="repeat" description="ANK 4">
    <location>
        <begin position="563"/>
        <end position="595"/>
    </location>
</feature>
<feature type="repeat" description="ANK 5">
    <location>
        <begin position="599"/>
        <end position="628"/>
    </location>
</feature>
<feature type="repeat" description="ANK 6">
    <location>
        <begin position="633"/>
        <end position="663"/>
    </location>
</feature>
<feature type="repeat" description="ANK 7">
    <location>
        <begin position="667"/>
        <end position="696"/>
    </location>
</feature>
<feature type="repeat" description="ANK 8">
    <location>
        <begin position="700"/>
        <end position="728"/>
    </location>
</feature>
<feature type="repeat" description="ANK 9">
    <location>
        <begin position="769"/>
        <end position="798"/>
    </location>
</feature>
<feature type="zinc finger region" description="ZZ-type" evidence="4">
    <location>
        <begin position="86"/>
        <end position="138"/>
    </location>
</feature>
<feature type="zinc finger region" description="RING-type 1" evidence="3">
    <location>
        <begin position="832"/>
        <end position="867"/>
    </location>
</feature>
<feature type="zinc finger region" description="RING-type 2" evidence="3">
    <location>
        <begin position="911"/>
        <end position="944"/>
    </location>
</feature>
<feature type="binding site" evidence="4">
    <location>
        <position position="91"/>
    </location>
    <ligand>
        <name>Zn(2+)</name>
        <dbReference type="ChEBI" id="CHEBI:29105"/>
        <label>1</label>
    </ligand>
</feature>
<feature type="binding site" evidence="4">
    <location>
        <position position="94"/>
    </location>
    <ligand>
        <name>Zn(2+)</name>
        <dbReference type="ChEBI" id="CHEBI:29105"/>
        <label>1</label>
    </ligand>
</feature>
<feature type="binding site" evidence="4">
    <location>
        <position position="106"/>
    </location>
    <ligand>
        <name>Zn(2+)</name>
        <dbReference type="ChEBI" id="CHEBI:29105"/>
        <label>2</label>
    </ligand>
</feature>
<feature type="binding site" evidence="4">
    <location>
        <position position="109"/>
    </location>
    <ligand>
        <name>Zn(2+)</name>
        <dbReference type="ChEBI" id="CHEBI:29105"/>
        <label>2</label>
    </ligand>
</feature>
<feature type="binding site" evidence="4">
    <location>
        <position position="115"/>
    </location>
    <ligand>
        <name>Zn(2+)</name>
        <dbReference type="ChEBI" id="CHEBI:29105"/>
        <label>1</label>
    </ligand>
</feature>
<feature type="binding site" evidence="4">
    <location>
        <position position="118"/>
    </location>
    <ligand>
        <name>Zn(2+)</name>
        <dbReference type="ChEBI" id="CHEBI:29105"/>
        <label>1</label>
    </ligand>
</feature>
<feature type="binding site" evidence="4">
    <location>
        <position position="124"/>
    </location>
    <ligand>
        <name>Zn(2+)</name>
        <dbReference type="ChEBI" id="CHEBI:29105"/>
        <label>2</label>
    </ligand>
</feature>
<feature type="binding site" evidence="4">
    <location>
        <position position="128"/>
    </location>
    <ligand>
        <name>Zn(2+)</name>
        <dbReference type="ChEBI" id="CHEBI:29105"/>
        <label>2</label>
    </ligand>
</feature>
<feature type="modified residue" description="Phosphoserine" evidence="12 13">
    <location>
        <position position="251"/>
    </location>
</feature>
<feature type="splice variant" id="VSP_035508" description="In isoform 7." evidence="7">
    <location>
        <begin position="1"/>
        <end position="101"/>
    </location>
</feature>
<feature type="splice variant" id="VSP_014393" description="In isoform 4 and isoform 10." evidence="7 8">
    <location>
        <begin position="176"/>
        <end position="240"/>
    </location>
</feature>
<feature type="splice variant" id="VSP_014394" description="In isoform 6." evidence="9">
    <location>
        <begin position="289"/>
        <end position="324"/>
    </location>
</feature>
<feature type="splice variant" id="VSP_014395" description="In isoform 3." evidence="8">
    <location>
        <begin position="289"/>
        <end position="292"/>
    </location>
</feature>
<feature type="splice variant" id="VSP_014396" description="In isoform 5." evidence="7">
    <location>
        <begin position="325"/>
        <end position="359"/>
    </location>
</feature>
<feature type="splice variant" id="VSP_035510" description="In isoform 9." evidence="7">
    <location>
        <begin position="615"/>
        <end position="955"/>
    </location>
</feature>
<feature type="splice variant" id="VSP_045186" description="In isoform 10." evidence="7">
    <original>ERQAGGGAAPGPRQTLGTPNTVTNLHVGAAPGPEAAECLVCSELALLVLFSPCQHRTVCEECARRMKKCIRCQVVVSKKLRPDGSEVASAAPAPGPPRQLVEELQSRYRQMEERITCPICIDSHIRLVFQCGHGACAPCGSALSACPICRQPIRDRIQIFV</original>
    <variation>VRAQDEEVHQVPGGRQQETAPRRL</variation>
    <location>
        <begin position="795"/>
        <end position="955"/>
    </location>
</feature>
<feature type="splice variant" id="VSP_035511" description="In isoform 8." evidence="7">
    <original>GGA</original>
    <variation>RGR</variation>
    <location>
        <begin position="800"/>
        <end position="802"/>
    </location>
</feature>
<feature type="splice variant" id="VSP_035512" description="In isoform 8." evidence="7">
    <location>
        <begin position="803"/>
        <end position="955"/>
    </location>
</feature>
<feature type="sequence conflict" description="In Ref. 6; AAH16490." evidence="9" ref="6">
    <original>K</original>
    <variation>N</variation>
    <location>
        <position position="22"/>
    </location>
</feature>
<feature type="sequence conflict" description="In Ref. 3; BAC77353." evidence="9" ref="3">
    <original>D</original>
    <variation>F</variation>
    <location>
        <position position="168"/>
    </location>
</feature>
<feature type="sequence conflict" description="In Ref. 4; BAG63969." evidence="9" ref="4">
    <original>G</original>
    <variation>R</variation>
    <location>
        <position position="177"/>
    </location>
</feature>
<feature type="sequence conflict" description="In Ref. 6; AAH37542." evidence="9" ref="6">
    <original>H</original>
    <variation>Y</variation>
    <location>
        <position position="215"/>
    </location>
</feature>
<feature type="sequence conflict" description="In Ref. 4; BAC04646." evidence="9" ref="4">
    <original>F</original>
    <variation>L</variation>
    <location>
        <position position="317"/>
    </location>
</feature>
<feature type="sequence conflict" description="In Ref. 6; AAH37542." evidence="9" ref="6">
    <original>D</original>
    <variation>G</variation>
    <location>
        <position position="450"/>
    </location>
</feature>
<feature type="sequence conflict" description="In Ref. 6; AAH37542." evidence="9" ref="6">
    <original>S</original>
    <variation>G</variation>
    <location>
        <position position="579"/>
    </location>
</feature>
<feature type="sequence conflict" description="In Ref. 4; BAC04752." evidence="9" ref="4">
    <original>K</original>
    <variation>E</variation>
    <location>
        <position position="631"/>
    </location>
</feature>
<feature type="sequence conflict" description="In Ref. 4; BAG53705." evidence="9" ref="4">
    <original>G</original>
    <variation>D</variation>
    <location>
        <position position="634"/>
    </location>
</feature>
<feature type="sequence conflict" description="In Ref. 4; BAC04646." evidence="9" ref="4">
    <original>S</original>
    <variation>F</variation>
    <location>
        <position position="879"/>
    </location>
</feature>
<feature type="sequence conflict" description="In Ref. 3; BAC77353." evidence="9" ref="3">
    <original>S</original>
    <variation>R</variation>
    <location>
        <position position="917"/>
    </location>
</feature>
<feature type="modified residue" description="N-acetylmethionine" evidence="11">
    <location sequence="Q96AX9-8">
        <position position="1"/>
    </location>
</feature>
<feature type="modified residue" description="N-acetylmethionine" evidence="11">
    <location sequence="Q96AX9-10">
        <position position="1"/>
    </location>
</feature>